<keyword id="KW-0963">Cytoplasm</keyword>
<keyword id="KW-0479">Metal-binding</keyword>
<keyword id="KW-0489">Methyltransferase</keyword>
<keyword id="KW-1185">Reference proteome</keyword>
<keyword id="KW-0677">Repeat</keyword>
<keyword id="KW-0949">S-adenosyl-L-methionine</keyword>
<keyword id="KW-0808">Transferase</keyword>
<keyword id="KW-0862">Zinc</keyword>
<keyword id="KW-0863">Zinc-finger</keyword>
<protein>
    <recommendedName>
        <fullName>Probable protein arginine N-methyltransferase 3</fullName>
        <ecNumber evidence="1">2.1.1.319</ecNumber>
    </recommendedName>
</protein>
<comment type="function">
    <text evidence="1">Protein-arginine N-methyltransferase that catalyzes both the monomethylation and asymmetric dimethylation of the guanidino nitrogens of arginine residues in target proteins, and therefore falls into the group of type I methyltransferases.</text>
</comment>
<comment type="catalytic activity">
    <reaction evidence="1">
        <text>L-arginyl-[protein] + S-adenosyl-L-methionine = N(omega)-methyl-L-arginyl-[protein] + S-adenosyl-L-homocysteine + H(+)</text>
        <dbReference type="Rhea" id="RHEA:48100"/>
        <dbReference type="Rhea" id="RHEA-COMP:10532"/>
        <dbReference type="Rhea" id="RHEA-COMP:11990"/>
        <dbReference type="ChEBI" id="CHEBI:15378"/>
        <dbReference type="ChEBI" id="CHEBI:29965"/>
        <dbReference type="ChEBI" id="CHEBI:57856"/>
        <dbReference type="ChEBI" id="CHEBI:59789"/>
        <dbReference type="ChEBI" id="CHEBI:65280"/>
    </reaction>
    <physiologicalReaction direction="left-to-right" evidence="1">
        <dbReference type="Rhea" id="RHEA:48101"/>
    </physiologicalReaction>
</comment>
<comment type="catalytic activity">
    <reaction evidence="1">
        <text>L-arginyl-[protein] + 2 S-adenosyl-L-methionine = N(omega),N(omega)-dimethyl-L-arginyl-[protein] + 2 S-adenosyl-L-homocysteine + 2 H(+)</text>
        <dbReference type="Rhea" id="RHEA:48096"/>
        <dbReference type="Rhea" id="RHEA-COMP:10532"/>
        <dbReference type="Rhea" id="RHEA-COMP:11991"/>
        <dbReference type="ChEBI" id="CHEBI:15378"/>
        <dbReference type="ChEBI" id="CHEBI:29965"/>
        <dbReference type="ChEBI" id="CHEBI:57856"/>
        <dbReference type="ChEBI" id="CHEBI:59789"/>
        <dbReference type="ChEBI" id="CHEBI:61897"/>
        <dbReference type="EC" id="2.1.1.319"/>
    </reaction>
    <physiologicalReaction direction="left-to-right" evidence="1">
        <dbReference type="Rhea" id="RHEA:48097"/>
    </physiologicalReaction>
</comment>
<comment type="subcellular location">
    <subcellularLocation>
        <location evidence="1">Cytoplasm</location>
        <location evidence="1">Cytosol</location>
    </subcellularLocation>
</comment>
<comment type="domain">
    <text evidence="2">The C2H2-type zinc-finger is responsible for substrate specificity.</text>
</comment>
<comment type="similarity">
    <text evidence="3">Belongs to the class I-like SAM-binding methyltransferase superfamily. Protein arginine N-methyltransferase family.</text>
</comment>
<comment type="sequence caution" evidence="5">
    <conflict type="erroneous gene model prediction">
        <sequence resource="EMBL-CDS" id="BAD31262"/>
    </conflict>
</comment>
<comment type="sequence caution" evidence="5">
    <conflict type="erroneous gene model prediction">
        <sequence resource="EMBL-CDS" id="BAF22333"/>
    </conflict>
</comment>
<proteinExistence type="evidence at transcript level"/>
<name>ANM3_ORYSJ</name>
<dbReference type="EC" id="2.1.1.319" evidence="1"/>
<dbReference type="EMBL" id="AP005292">
    <property type="protein sequence ID" value="BAD31262.1"/>
    <property type="status" value="ALT_SEQ"/>
    <property type="molecule type" value="Genomic_DNA"/>
</dbReference>
<dbReference type="EMBL" id="AP008213">
    <property type="protein sequence ID" value="BAF22333.2"/>
    <property type="status" value="ALT_SEQ"/>
    <property type="molecule type" value="Genomic_DNA"/>
</dbReference>
<dbReference type="EMBL" id="AP014963">
    <property type="status" value="NOT_ANNOTATED_CDS"/>
    <property type="molecule type" value="Genomic_DNA"/>
</dbReference>
<dbReference type="EMBL" id="CM000144">
    <property type="protein sequence ID" value="EAZ40828.1"/>
    <property type="molecule type" value="Genomic_DNA"/>
</dbReference>
<dbReference type="EMBL" id="AK105489">
    <property type="status" value="NOT_ANNOTATED_CDS"/>
    <property type="molecule type" value="mRNA"/>
</dbReference>
<dbReference type="RefSeq" id="XP_015647334.1">
    <property type="nucleotide sequence ID" value="XM_015791848.1"/>
</dbReference>
<dbReference type="SMR" id="A3BMN9"/>
<dbReference type="FunCoup" id="A3BMN9">
    <property type="interactions" value="243"/>
</dbReference>
<dbReference type="STRING" id="39947.A3BMN9"/>
<dbReference type="iPTMnet" id="A3BMN9"/>
<dbReference type="PaxDb" id="39947-A3BMN9"/>
<dbReference type="EnsemblPlants" id="Os07t0640000-01">
    <property type="protein sequence ID" value="Os07t0640000-01"/>
    <property type="gene ID" value="Os07g0640000"/>
</dbReference>
<dbReference type="Gramene" id="Os07t0640000-01">
    <property type="protein sequence ID" value="Os07t0640000-01"/>
    <property type="gene ID" value="Os07g0640000"/>
</dbReference>
<dbReference type="KEGG" id="dosa:Os07g0640000"/>
<dbReference type="eggNOG" id="KOG1499">
    <property type="taxonomic scope" value="Eukaryota"/>
</dbReference>
<dbReference type="HOGENOM" id="CLU_017375_1_2_1"/>
<dbReference type="InParanoid" id="A3BMN9"/>
<dbReference type="OrthoDB" id="7848332at2759"/>
<dbReference type="Proteomes" id="UP000000763">
    <property type="component" value="Chromosome 7"/>
</dbReference>
<dbReference type="Proteomes" id="UP000007752">
    <property type="component" value="Chromosome 7"/>
</dbReference>
<dbReference type="Proteomes" id="UP000059680">
    <property type="component" value="Chromosome 7"/>
</dbReference>
<dbReference type="GO" id="GO:0005829">
    <property type="term" value="C:cytosol"/>
    <property type="evidence" value="ECO:0007669"/>
    <property type="project" value="UniProtKB-SubCell"/>
</dbReference>
<dbReference type="GO" id="GO:0005634">
    <property type="term" value="C:nucleus"/>
    <property type="evidence" value="ECO:0000318"/>
    <property type="project" value="GO_Central"/>
</dbReference>
<dbReference type="GO" id="GO:0042054">
    <property type="term" value="F:histone methyltransferase activity"/>
    <property type="evidence" value="ECO:0000318"/>
    <property type="project" value="GO_Central"/>
</dbReference>
<dbReference type="GO" id="GO:0016274">
    <property type="term" value="F:protein-arginine N-methyltransferase activity"/>
    <property type="evidence" value="ECO:0000318"/>
    <property type="project" value="GO_Central"/>
</dbReference>
<dbReference type="GO" id="GO:0035242">
    <property type="term" value="F:protein-arginine omega-N asymmetric methyltransferase activity"/>
    <property type="evidence" value="ECO:0007669"/>
    <property type="project" value="RHEA"/>
</dbReference>
<dbReference type="GO" id="GO:0035241">
    <property type="term" value="F:protein-arginine omega-N monomethyltransferase activity"/>
    <property type="evidence" value="ECO:0007669"/>
    <property type="project" value="RHEA"/>
</dbReference>
<dbReference type="GO" id="GO:0000976">
    <property type="term" value="F:transcription cis-regulatory region binding"/>
    <property type="evidence" value="ECO:0007669"/>
    <property type="project" value="EnsemblPlants"/>
</dbReference>
<dbReference type="GO" id="GO:0008270">
    <property type="term" value="F:zinc ion binding"/>
    <property type="evidence" value="ECO:0007669"/>
    <property type="project" value="UniProtKB-KW"/>
</dbReference>
<dbReference type="GO" id="GO:0006338">
    <property type="term" value="P:chromatin remodeling"/>
    <property type="evidence" value="ECO:0000318"/>
    <property type="project" value="GO_Central"/>
</dbReference>
<dbReference type="GO" id="GO:0032259">
    <property type="term" value="P:methylation"/>
    <property type="evidence" value="ECO:0007669"/>
    <property type="project" value="UniProtKB-KW"/>
</dbReference>
<dbReference type="GO" id="GO:0006355">
    <property type="term" value="P:regulation of DNA-templated transcription"/>
    <property type="evidence" value="ECO:0000318"/>
    <property type="project" value="GO_Central"/>
</dbReference>
<dbReference type="CDD" id="cd02440">
    <property type="entry name" value="AdoMet_MTases"/>
    <property type="match status" value="1"/>
</dbReference>
<dbReference type="FunFam" id="2.70.160.11:FF:000015">
    <property type="entry name" value="Probable protein arginine N-methyltransferase 3"/>
    <property type="match status" value="1"/>
</dbReference>
<dbReference type="FunFam" id="3.40.50.150:FF:000016">
    <property type="entry name" value="Protein arginine N-methyltransferase 6"/>
    <property type="match status" value="1"/>
</dbReference>
<dbReference type="Gene3D" id="2.70.160.11">
    <property type="entry name" value="Hnrnp arginine n-methyltransferase1"/>
    <property type="match status" value="1"/>
</dbReference>
<dbReference type="Gene3D" id="3.40.50.150">
    <property type="entry name" value="Vaccinia Virus protein VP39"/>
    <property type="match status" value="1"/>
</dbReference>
<dbReference type="InterPro" id="IPR049482">
    <property type="entry name" value="ANM3-like_C2H2_Zf"/>
</dbReference>
<dbReference type="InterPro" id="IPR025799">
    <property type="entry name" value="Arg_MeTrfase"/>
</dbReference>
<dbReference type="InterPro" id="IPR041698">
    <property type="entry name" value="Methyltransf_25"/>
</dbReference>
<dbReference type="InterPro" id="IPR055135">
    <property type="entry name" value="PRMT_dom"/>
</dbReference>
<dbReference type="InterPro" id="IPR029063">
    <property type="entry name" value="SAM-dependent_MTases_sf"/>
</dbReference>
<dbReference type="InterPro" id="IPR036236">
    <property type="entry name" value="Znf_C2H2_sf"/>
</dbReference>
<dbReference type="InterPro" id="IPR013087">
    <property type="entry name" value="Znf_C2H2_type"/>
</dbReference>
<dbReference type="PANTHER" id="PTHR11006">
    <property type="entry name" value="PROTEIN ARGININE N-METHYLTRANSFERASE"/>
    <property type="match status" value="1"/>
</dbReference>
<dbReference type="PANTHER" id="PTHR11006:SF89">
    <property type="entry name" value="PROTEIN ARGININE N-METHYLTRANSFERASE 3-RELATED"/>
    <property type="match status" value="1"/>
</dbReference>
<dbReference type="Pfam" id="PF21137">
    <property type="entry name" value="ANM3_C2H2_Zf"/>
    <property type="match status" value="1"/>
</dbReference>
<dbReference type="Pfam" id="PF13649">
    <property type="entry name" value="Methyltransf_25"/>
    <property type="match status" value="1"/>
</dbReference>
<dbReference type="Pfam" id="PF22528">
    <property type="entry name" value="PRMT_C"/>
    <property type="match status" value="1"/>
</dbReference>
<dbReference type="SUPFAM" id="SSF57667">
    <property type="entry name" value="beta-beta-alpha zinc fingers"/>
    <property type="match status" value="1"/>
</dbReference>
<dbReference type="SUPFAM" id="SSF53335">
    <property type="entry name" value="S-adenosyl-L-methionine-dependent methyltransferases"/>
    <property type="match status" value="1"/>
</dbReference>
<dbReference type="PROSITE" id="PS51678">
    <property type="entry name" value="SAM_MT_PRMT"/>
    <property type="match status" value="1"/>
</dbReference>
<dbReference type="PROSITE" id="PS00028">
    <property type="entry name" value="ZINC_FINGER_C2H2_1"/>
    <property type="match status" value="1"/>
</dbReference>
<organism>
    <name type="scientific">Oryza sativa subsp. japonica</name>
    <name type="common">Rice</name>
    <dbReference type="NCBI Taxonomy" id="39947"/>
    <lineage>
        <taxon>Eukaryota</taxon>
        <taxon>Viridiplantae</taxon>
        <taxon>Streptophyta</taxon>
        <taxon>Embryophyta</taxon>
        <taxon>Tracheophyta</taxon>
        <taxon>Spermatophyta</taxon>
        <taxon>Magnoliopsida</taxon>
        <taxon>Liliopsida</taxon>
        <taxon>Poales</taxon>
        <taxon>Poaceae</taxon>
        <taxon>BOP clade</taxon>
        <taxon>Oryzoideae</taxon>
        <taxon>Oryzeae</taxon>
        <taxon>Oryzinae</taxon>
        <taxon>Oryza</taxon>
        <taxon>Oryza sativa</taxon>
    </lineage>
</organism>
<accession>A3BMN9</accession>
<accession>Q0D490</accession>
<accession>Q69R11</accession>
<evidence type="ECO:0000250" key="1">
    <source>
        <dbReference type="UniProtKB" id="O60678"/>
    </source>
</evidence>
<evidence type="ECO:0000250" key="2">
    <source>
        <dbReference type="UniProtKB" id="O70467"/>
    </source>
</evidence>
<evidence type="ECO:0000255" key="3">
    <source>
        <dbReference type="PROSITE-ProRule" id="PRU01015"/>
    </source>
</evidence>
<evidence type="ECO:0000256" key="4">
    <source>
        <dbReference type="SAM" id="MobiDB-lite"/>
    </source>
</evidence>
<evidence type="ECO:0000305" key="5"/>
<gene>
    <name type="primary">PRMT3</name>
    <name type="ordered locus">Os07g0640000</name>
    <name type="ordered locus">LOC_Os07g44640</name>
    <name type="ORF">OJ1340_C08.133</name>
    <name type="ORF">OsJ_024311</name>
</gene>
<reference key="1">
    <citation type="journal article" date="2005" name="Nature">
        <title>The map-based sequence of the rice genome.</title>
        <authorList>
            <consortium name="International rice genome sequencing project (IRGSP)"/>
        </authorList>
    </citation>
    <scope>NUCLEOTIDE SEQUENCE [LARGE SCALE GENOMIC DNA]</scope>
    <source>
        <strain>cv. Nipponbare</strain>
    </source>
</reference>
<reference key="2">
    <citation type="journal article" date="2008" name="Nucleic Acids Res.">
        <title>The rice annotation project database (RAP-DB): 2008 update.</title>
        <authorList>
            <consortium name="The rice annotation project (RAP)"/>
        </authorList>
    </citation>
    <scope>GENOME REANNOTATION</scope>
    <source>
        <strain>cv. Nipponbare</strain>
    </source>
</reference>
<reference key="3">
    <citation type="journal article" date="2013" name="Rice">
        <title>Improvement of the Oryza sativa Nipponbare reference genome using next generation sequence and optical map data.</title>
        <authorList>
            <person name="Kawahara Y."/>
            <person name="de la Bastide M."/>
            <person name="Hamilton J.P."/>
            <person name="Kanamori H."/>
            <person name="McCombie W.R."/>
            <person name="Ouyang S."/>
            <person name="Schwartz D.C."/>
            <person name="Tanaka T."/>
            <person name="Wu J."/>
            <person name="Zhou S."/>
            <person name="Childs K.L."/>
            <person name="Davidson R.M."/>
            <person name="Lin H."/>
            <person name="Quesada-Ocampo L."/>
            <person name="Vaillancourt B."/>
            <person name="Sakai H."/>
            <person name="Lee S.S."/>
            <person name="Kim J."/>
            <person name="Numa H."/>
            <person name="Itoh T."/>
            <person name="Buell C.R."/>
            <person name="Matsumoto T."/>
        </authorList>
    </citation>
    <scope>GENOME REANNOTATION</scope>
    <source>
        <strain>cv. Nipponbare</strain>
    </source>
</reference>
<reference key="4">
    <citation type="journal article" date="2005" name="PLoS Biol.">
        <title>The genomes of Oryza sativa: a history of duplications.</title>
        <authorList>
            <person name="Yu J."/>
            <person name="Wang J."/>
            <person name="Lin W."/>
            <person name="Li S."/>
            <person name="Li H."/>
            <person name="Zhou J."/>
            <person name="Ni P."/>
            <person name="Dong W."/>
            <person name="Hu S."/>
            <person name="Zeng C."/>
            <person name="Zhang J."/>
            <person name="Zhang Y."/>
            <person name="Li R."/>
            <person name="Xu Z."/>
            <person name="Li S."/>
            <person name="Li X."/>
            <person name="Zheng H."/>
            <person name="Cong L."/>
            <person name="Lin L."/>
            <person name="Yin J."/>
            <person name="Geng J."/>
            <person name="Li G."/>
            <person name="Shi J."/>
            <person name="Liu J."/>
            <person name="Lv H."/>
            <person name="Li J."/>
            <person name="Wang J."/>
            <person name="Deng Y."/>
            <person name="Ran L."/>
            <person name="Shi X."/>
            <person name="Wang X."/>
            <person name="Wu Q."/>
            <person name="Li C."/>
            <person name="Ren X."/>
            <person name="Wang J."/>
            <person name="Wang X."/>
            <person name="Li D."/>
            <person name="Liu D."/>
            <person name="Zhang X."/>
            <person name="Ji Z."/>
            <person name="Zhao W."/>
            <person name="Sun Y."/>
            <person name="Zhang Z."/>
            <person name="Bao J."/>
            <person name="Han Y."/>
            <person name="Dong L."/>
            <person name="Ji J."/>
            <person name="Chen P."/>
            <person name="Wu S."/>
            <person name="Liu J."/>
            <person name="Xiao Y."/>
            <person name="Bu D."/>
            <person name="Tan J."/>
            <person name="Yang L."/>
            <person name="Ye C."/>
            <person name="Zhang J."/>
            <person name="Xu J."/>
            <person name="Zhou Y."/>
            <person name="Yu Y."/>
            <person name="Zhang B."/>
            <person name="Zhuang S."/>
            <person name="Wei H."/>
            <person name="Liu B."/>
            <person name="Lei M."/>
            <person name="Yu H."/>
            <person name="Li Y."/>
            <person name="Xu H."/>
            <person name="Wei S."/>
            <person name="He X."/>
            <person name="Fang L."/>
            <person name="Zhang Z."/>
            <person name="Zhang Y."/>
            <person name="Huang X."/>
            <person name="Su Z."/>
            <person name="Tong W."/>
            <person name="Li J."/>
            <person name="Tong Z."/>
            <person name="Li S."/>
            <person name="Ye J."/>
            <person name="Wang L."/>
            <person name="Fang L."/>
            <person name="Lei T."/>
            <person name="Chen C.-S."/>
            <person name="Chen H.-C."/>
            <person name="Xu Z."/>
            <person name="Li H."/>
            <person name="Huang H."/>
            <person name="Zhang F."/>
            <person name="Xu H."/>
            <person name="Li N."/>
            <person name="Zhao C."/>
            <person name="Li S."/>
            <person name="Dong L."/>
            <person name="Huang Y."/>
            <person name="Li L."/>
            <person name="Xi Y."/>
            <person name="Qi Q."/>
            <person name="Li W."/>
            <person name="Zhang B."/>
            <person name="Hu W."/>
            <person name="Zhang Y."/>
            <person name="Tian X."/>
            <person name="Jiao Y."/>
            <person name="Liang X."/>
            <person name="Jin J."/>
            <person name="Gao L."/>
            <person name="Zheng W."/>
            <person name="Hao B."/>
            <person name="Liu S.-M."/>
            <person name="Wang W."/>
            <person name="Yuan L."/>
            <person name="Cao M."/>
            <person name="McDermott J."/>
            <person name="Samudrala R."/>
            <person name="Wang J."/>
            <person name="Wong G.K.-S."/>
            <person name="Yang H."/>
        </authorList>
    </citation>
    <scope>NUCLEOTIDE SEQUENCE [LARGE SCALE GENOMIC DNA]</scope>
    <source>
        <strain>cv. Nipponbare</strain>
    </source>
</reference>
<reference key="5">
    <citation type="journal article" date="2003" name="Science">
        <title>Collection, mapping, and annotation of over 28,000 cDNA clones from japonica rice.</title>
        <authorList>
            <consortium name="The rice full-length cDNA consortium"/>
        </authorList>
    </citation>
    <scope>NUCLEOTIDE SEQUENCE [LARGE SCALE MRNA] OF 218-620</scope>
    <source>
        <strain>cv. Nipponbare</strain>
    </source>
</reference>
<sequence>MATREHELRPEQERLGEDREEYEDGEEEEEEGEEGWDDWESDGDDAGGGGGGGGLLCLFCSARFDSESSLFSHCASEHRFDFYRVVKETGMDFYGCIKLINFVRSKVAENKCWSCGQVFSSNSELCGHLHALEIPQLEGKVPWGDDVYLKPFLEDDSLLHSLSVFDDDDEDDCGMPMEKGGCSAGNGSLAETCESNLKSIINDGSDVIDRFERTCTIESTDGECSGSLAQEPSDKQLKIARASAAARGIKSVDESYFGSYSSFGIHREMLGDKVRTEAYRDALLGNPSLMNGATVLDVGCGTGILSLFAAKAGASRVIAVDGSAKMVSVATEVAKSNGFLYDENMEMQQKRDTQVITVVHTKAEELNHKIQVPSNKFDVLVSEWMGYCLLYESMLSSVLYARDHFLKPGGAILPDTATIFGAGFGKGGTSLPFWENVYGFDMSCIGKEVTGNSARFPVVDILASEDIVTETAVLNSFDLATMKENEMDFTSSFELRLSESGVSQSGVTWCYGIILWFDTGFTNRFCKEKPVNLSTSPFSTPTHWSQTIFTFEEPIAMAKEESAVVSSASVGTDECPAVMIRSRISIVRASEHRSIDISIETTGISSDGRKRSWPVQIFNL</sequence>
<feature type="chain" id="PRO_0000293992" description="Probable protein arginine N-methyltransferase 3">
    <location>
        <begin position="1"/>
        <end position="620"/>
    </location>
</feature>
<feature type="domain" description="SAM-dependent MTase PRMT-type" evidence="3">
    <location>
        <begin position="253"/>
        <end position="582"/>
    </location>
</feature>
<feature type="zinc finger region" description="C2H2-type 1">
    <location>
        <begin position="55"/>
        <end position="78"/>
    </location>
</feature>
<feature type="zinc finger region" description="C2H2-type 2; degenerate">
    <location>
        <begin position="110"/>
        <end position="137"/>
    </location>
</feature>
<feature type="region of interest" description="Disordered" evidence="4">
    <location>
        <begin position="1"/>
        <end position="45"/>
    </location>
</feature>
<feature type="compositionally biased region" description="Basic and acidic residues" evidence="4">
    <location>
        <begin position="1"/>
        <end position="17"/>
    </location>
</feature>
<feature type="compositionally biased region" description="Acidic residues" evidence="4">
    <location>
        <begin position="18"/>
        <end position="45"/>
    </location>
</feature>
<feature type="active site" evidence="2">
    <location>
        <position position="383"/>
    </location>
</feature>
<feature type="active site" evidence="2">
    <location>
        <position position="392"/>
    </location>
</feature>
<feature type="binding site" evidence="2">
    <location>
        <position position="275"/>
    </location>
    <ligand>
        <name>S-adenosyl-L-homocysteine</name>
        <dbReference type="ChEBI" id="CHEBI:57856"/>
    </ligand>
</feature>
<feature type="binding site" evidence="2">
    <location>
        <position position="299"/>
    </location>
    <ligand>
        <name>S-adenosyl-L-homocysteine</name>
        <dbReference type="ChEBI" id="CHEBI:57856"/>
    </ligand>
</feature>
<feature type="binding site" evidence="2">
    <location>
        <position position="321"/>
    </location>
    <ligand>
        <name>S-adenosyl-L-homocysteine</name>
        <dbReference type="ChEBI" id="CHEBI:57856"/>
    </ligand>
</feature>
<feature type="binding site" evidence="2">
    <location>
        <position position="323"/>
    </location>
    <ligand>
        <name>S-adenosyl-L-homocysteine</name>
        <dbReference type="ChEBI" id="CHEBI:57856"/>
    </ligand>
</feature>
<feature type="binding site" evidence="2">
    <location>
        <position position="364"/>
    </location>
    <ligand>
        <name>S-adenosyl-L-homocysteine</name>
        <dbReference type="ChEBI" id="CHEBI:57856"/>
    </ligand>
</feature>